<evidence type="ECO:0000255" key="1">
    <source>
        <dbReference type="HAMAP-Rule" id="MF_01396"/>
    </source>
</evidence>
<sequence>MELTLGLVAIASAILIAFGALGTAIGFGLLGGRFLEAVARQPELAPQLQTRMFLIAGLLDAVPMIGVGIGLFFIFANPFVG</sequence>
<feature type="chain" id="PRO_1000184303" description="ATP synthase subunit c">
    <location>
        <begin position="1"/>
        <end position="81"/>
    </location>
</feature>
<feature type="transmembrane region" description="Helical" evidence="1">
    <location>
        <begin position="7"/>
        <end position="27"/>
    </location>
</feature>
<feature type="transmembrane region" description="Helical" evidence="1">
    <location>
        <begin position="55"/>
        <end position="75"/>
    </location>
</feature>
<feature type="site" description="Reversibly protonated during proton transport" evidence="1">
    <location>
        <position position="60"/>
    </location>
</feature>
<accession>B2I0Z7</accession>
<comment type="function">
    <text evidence="1">F(1)F(0) ATP synthase produces ATP from ADP in the presence of a proton or sodium gradient. F-type ATPases consist of two structural domains, F(1) containing the extramembraneous catalytic core and F(0) containing the membrane proton channel, linked together by a central stalk and a peripheral stalk. During catalysis, ATP synthesis in the catalytic domain of F(1) is coupled via a rotary mechanism of the central stalk subunits to proton translocation.</text>
</comment>
<comment type="function">
    <text evidence="1">Key component of the F(0) channel; it plays a direct role in translocation across the membrane. A homomeric c-ring of between 10-14 subunits forms the central stalk rotor element with the F(1) delta and epsilon subunits.</text>
</comment>
<comment type="subunit">
    <text evidence="1">F-type ATPases have 2 components, F(1) - the catalytic core - and F(0) - the membrane proton channel. F(1) has five subunits: alpha(3), beta(3), gamma(1), delta(1), epsilon(1). F(0) has three main subunits: a(1), b(2) and c(10-14). The alpha and beta chains form an alternating ring which encloses part of the gamma chain. F(1) is attached to F(0) by a central stalk formed by the gamma and epsilon chains, while a peripheral stalk is formed by the delta and b chains.</text>
</comment>
<comment type="subcellular location">
    <subcellularLocation>
        <location evidence="1">Cell inner membrane</location>
        <topology evidence="1">Multi-pass membrane protein</topology>
    </subcellularLocation>
</comment>
<comment type="similarity">
    <text evidence="1">Belongs to the ATPase C chain family.</text>
</comment>
<name>ATPL_ACIBC</name>
<protein>
    <recommendedName>
        <fullName evidence="1">ATP synthase subunit c</fullName>
    </recommendedName>
    <alternativeName>
        <fullName evidence="1">ATP synthase F(0) sector subunit c</fullName>
    </alternativeName>
    <alternativeName>
        <fullName evidence="1">F-type ATPase subunit c</fullName>
        <shortName evidence="1">F-ATPase subunit c</shortName>
    </alternativeName>
    <alternativeName>
        <fullName evidence="1">Lipid-binding protein</fullName>
    </alternativeName>
</protein>
<keyword id="KW-0066">ATP synthesis</keyword>
<keyword id="KW-0997">Cell inner membrane</keyword>
<keyword id="KW-1003">Cell membrane</keyword>
<keyword id="KW-0138">CF(0)</keyword>
<keyword id="KW-0375">Hydrogen ion transport</keyword>
<keyword id="KW-0406">Ion transport</keyword>
<keyword id="KW-0446">Lipid-binding</keyword>
<keyword id="KW-0472">Membrane</keyword>
<keyword id="KW-0812">Transmembrane</keyword>
<keyword id="KW-1133">Transmembrane helix</keyword>
<keyword id="KW-0813">Transport</keyword>
<proteinExistence type="inferred from homology"/>
<organism>
    <name type="scientific">Acinetobacter baumannii (strain ACICU)</name>
    <dbReference type="NCBI Taxonomy" id="405416"/>
    <lineage>
        <taxon>Bacteria</taxon>
        <taxon>Pseudomonadati</taxon>
        <taxon>Pseudomonadota</taxon>
        <taxon>Gammaproteobacteria</taxon>
        <taxon>Moraxellales</taxon>
        <taxon>Moraxellaceae</taxon>
        <taxon>Acinetobacter</taxon>
        <taxon>Acinetobacter calcoaceticus/baumannii complex</taxon>
    </lineage>
</organism>
<dbReference type="EMBL" id="CP000863">
    <property type="protein sequence ID" value="ACC55485.1"/>
    <property type="molecule type" value="Genomic_DNA"/>
</dbReference>
<dbReference type="RefSeq" id="WP_000424060.1">
    <property type="nucleotide sequence ID" value="NZ_CP031380.1"/>
</dbReference>
<dbReference type="SMR" id="B2I0Z7"/>
<dbReference type="GeneID" id="97424931"/>
<dbReference type="KEGG" id="abc:ACICU_00173"/>
<dbReference type="HOGENOM" id="CLU_148047_1_0_6"/>
<dbReference type="Proteomes" id="UP000008839">
    <property type="component" value="Chromosome"/>
</dbReference>
<dbReference type="GO" id="GO:0005886">
    <property type="term" value="C:plasma membrane"/>
    <property type="evidence" value="ECO:0007669"/>
    <property type="project" value="UniProtKB-SubCell"/>
</dbReference>
<dbReference type="GO" id="GO:0045259">
    <property type="term" value="C:proton-transporting ATP synthase complex"/>
    <property type="evidence" value="ECO:0007669"/>
    <property type="project" value="UniProtKB-KW"/>
</dbReference>
<dbReference type="GO" id="GO:0033177">
    <property type="term" value="C:proton-transporting two-sector ATPase complex, proton-transporting domain"/>
    <property type="evidence" value="ECO:0007669"/>
    <property type="project" value="InterPro"/>
</dbReference>
<dbReference type="GO" id="GO:0008289">
    <property type="term" value="F:lipid binding"/>
    <property type="evidence" value="ECO:0007669"/>
    <property type="project" value="UniProtKB-KW"/>
</dbReference>
<dbReference type="GO" id="GO:0046933">
    <property type="term" value="F:proton-transporting ATP synthase activity, rotational mechanism"/>
    <property type="evidence" value="ECO:0007669"/>
    <property type="project" value="UniProtKB-UniRule"/>
</dbReference>
<dbReference type="CDD" id="cd18185">
    <property type="entry name" value="ATP-synt_Fo_c_ATPE"/>
    <property type="match status" value="1"/>
</dbReference>
<dbReference type="FunFam" id="1.20.20.10:FF:000002">
    <property type="entry name" value="ATP synthase subunit c"/>
    <property type="match status" value="1"/>
</dbReference>
<dbReference type="Gene3D" id="1.20.20.10">
    <property type="entry name" value="F1F0 ATP synthase subunit C"/>
    <property type="match status" value="1"/>
</dbReference>
<dbReference type="HAMAP" id="MF_01396">
    <property type="entry name" value="ATP_synth_c_bact"/>
    <property type="match status" value="1"/>
</dbReference>
<dbReference type="InterPro" id="IPR005953">
    <property type="entry name" value="ATP_synth_csu_bac/chlpt"/>
</dbReference>
<dbReference type="InterPro" id="IPR000454">
    <property type="entry name" value="ATP_synth_F0_csu"/>
</dbReference>
<dbReference type="InterPro" id="IPR020537">
    <property type="entry name" value="ATP_synth_F0_csu_DDCD_BS"/>
</dbReference>
<dbReference type="InterPro" id="IPR038662">
    <property type="entry name" value="ATP_synth_F0_csu_sf"/>
</dbReference>
<dbReference type="InterPro" id="IPR002379">
    <property type="entry name" value="ATPase_proteolipid_c-like_dom"/>
</dbReference>
<dbReference type="InterPro" id="IPR035921">
    <property type="entry name" value="F/V-ATP_Csub_sf"/>
</dbReference>
<dbReference type="NCBIfam" id="TIGR01260">
    <property type="entry name" value="ATP_synt_c"/>
    <property type="match status" value="1"/>
</dbReference>
<dbReference type="NCBIfam" id="NF005363">
    <property type="entry name" value="PRK06876.1"/>
    <property type="match status" value="1"/>
</dbReference>
<dbReference type="Pfam" id="PF00137">
    <property type="entry name" value="ATP-synt_C"/>
    <property type="match status" value="1"/>
</dbReference>
<dbReference type="PRINTS" id="PR00124">
    <property type="entry name" value="ATPASEC"/>
</dbReference>
<dbReference type="SUPFAM" id="SSF81333">
    <property type="entry name" value="F1F0 ATP synthase subunit C"/>
    <property type="match status" value="1"/>
</dbReference>
<dbReference type="PROSITE" id="PS00605">
    <property type="entry name" value="ATPASE_C"/>
    <property type="match status" value="1"/>
</dbReference>
<reference key="1">
    <citation type="journal article" date="2008" name="Antimicrob. Agents Chemother.">
        <title>Whole-genome pyrosequencing of an epidemic multidrug-resistant Acinetobacter baumannii strain belonging to the European clone II group.</title>
        <authorList>
            <person name="Iacono M."/>
            <person name="Villa L."/>
            <person name="Fortini D."/>
            <person name="Bordoni R."/>
            <person name="Imperi F."/>
            <person name="Bonnal R.J."/>
            <person name="Sicheritz-Ponten T."/>
            <person name="De Bellis G."/>
            <person name="Visca P."/>
            <person name="Cassone A."/>
            <person name="Carattoli A."/>
        </authorList>
    </citation>
    <scope>NUCLEOTIDE SEQUENCE [LARGE SCALE GENOMIC DNA]</scope>
    <source>
        <strain>ACICU</strain>
    </source>
</reference>
<gene>
    <name evidence="1" type="primary">atpE</name>
    <name type="ordered locus">ACICU_00173</name>
</gene>